<gene>
    <name type="primary">FYCO1</name>
    <name type="synonym">ZFYVE7</name>
</gene>
<sequence>MASTNAESQLQRIIRDLQDAVTELSKEFQEAGEPITDDSTSLHKFSYKLEYLLQFDQKEKATLLGNKKDYWDYFCACLAKVKGANDGIRFVKSISELRTSLGKGRAFIRYSLVHQRLADTLQQCFMNTKVTSDWYYARSPFLQPKLSSDIVGQLYELTEVQFDLASRGFDLDAAWPTFARRTLTTGSSAYLWKPPSRSSSMSSLVSSYLQTQEMVSNFDLNSPLNNEALEGFDEMRLELDQLEVREKQLRERMQQLDRENQELRAAVSQQGEQLQTERERGRTAAEDNVRLTCLVAELQKQWEVTQATQNTVKELQTCLQGLELGAAEKEEDYHTALRRLESMLQPLAQELEATRDSLDKKNQHLASFPGWLAMAQQKADTASDTKGRQEPIPSDAAQEMQELGEKLQALERERTKVEEVNRQQSAQLEQLVKELQLKEDARASLERLVKEMAPLQEELSGKGQEADQLWRRLQELLAHTSSWEEELAELRREKKQQQEEKELLEQEVRSLTRQLQFLETQLAQVSQHVSDLEEQKKQLIQDKDHLSQQVGMLERLAGPPGPELPVAGEKNEALVPVNSSLQEAWGKPEEEQRGLQEAQLDDTKVQEGSQEEELRQANRELEKELQNVVGRNQLLEGKLQALQADYQALQQRESAIQGSLASLEAEQASIRHLGDQMEASLLAVRKAKEAMKAQMAEKEAILQSKEGECQQLREEVEQCQQLAEARHRELRALESQCQQQTQLIEVLTAEKGQQGVGPPTDNEARELAAQLALSQAQLEVHQGEVQRLQAQVVDLQAKMRAALDDQDKVQSQLSMAEAVLREHKTLVQQLKEQNEALNRAHVQELLQCSEREGALQEERADEAQQREEELRALQEELSQAKCSSEEAQLEHAELQEQLHRANTDTAELGIQVCALTVEKERVEEALACAVQELQDAKEAASREREGLERQVAGLQQEKESLQEKLKAAKAAAGSLPGLQAQLAQAEQRAQSLQEAAHQELNTLKFQLSAEIMDYQSRLKNAGEECKSLRGQLEEQGRQLQAAEEAVEKLKATQADMGEKLSCTSNHLAECQAAMLRKDKEGAALREDLERTQKELEKATTKIQEYYNKLCQEVTNRERNDQKMLADLDDLNRTKKYLEERLIELLRDKDALWQKSDALEFQQKLSAEERWLGDTEANHCLDCKREFSWMVRRHHCRICGRIFCYYCCNNYVLSKHGGKKERCCRACFQKLSEGPGSPDSSGSGTSQGEPSPALSPASPGPQATGGQGANTDYRPPDDAVFDIITDEELCQIQESGSSLPETPTETDSLDPNAAEQDTTSTSLTPEDTEDMPVGQDSEICLLKSGELMIKVPLTVDEIASFGEGSRELFVRSSTYSLIPITVAEAGLTISWVFSSDPKSISFSVVFQEAEDTPLDQCKVLIPTTRCNSHKENIQGQLKVRTPGIYMLIFDNTFSRFVSKKVFYHLTVDRPVIYDGSDFL</sequence>
<feature type="initiator methionine" description="Removed" evidence="19 20 21">
    <location>
        <position position="1"/>
    </location>
</feature>
<feature type="chain" id="PRO_0000245837" description="FYVE and coiled-coil domain-containing protein 1">
    <location>
        <begin position="2"/>
        <end position="1478"/>
    </location>
</feature>
<feature type="domain" description="RUN" evidence="6">
    <location>
        <begin position="36"/>
        <end position="169"/>
    </location>
</feature>
<feature type="domain" description="GOLD" evidence="5">
    <location>
        <begin position="1337"/>
        <end position="1466"/>
    </location>
</feature>
<feature type="zinc finger region" description="FYVE-type" evidence="4">
    <location>
        <begin position="1173"/>
        <end position="1231"/>
    </location>
</feature>
<feature type="region of interest" description="Disordered" evidence="7">
    <location>
        <begin position="586"/>
        <end position="613"/>
    </location>
</feature>
<feature type="region of interest" description="Disordered" evidence="7">
    <location>
        <begin position="1231"/>
        <end position="1277"/>
    </location>
</feature>
<feature type="region of interest" description="Disordered" evidence="7">
    <location>
        <begin position="1294"/>
        <end position="1332"/>
    </location>
</feature>
<feature type="coiled-coil region" evidence="3">
    <location>
        <begin position="4"/>
        <end position="33"/>
    </location>
</feature>
<feature type="coiled-coil region" evidence="3">
    <location>
        <begin position="225"/>
        <end position="280"/>
    </location>
</feature>
<feature type="coiled-coil region" evidence="3">
    <location>
        <begin position="394"/>
        <end position="555"/>
    </location>
</feature>
<feature type="coiled-coil region" evidence="3">
    <location>
        <begin position="596"/>
        <end position="1151"/>
    </location>
</feature>
<feature type="compositionally biased region" description="Low complexity" evidence="7">
    <location>
        <begin position="1231"/>
        <end position="1261"/>
    </location>
</feature>
<feature type="compositionally biased region" description="Polar residues" evidence="7">
    <location>
        <begin position="1294"/>
        <end position="1305"/>
    </location>
</feature>
<feature type="compositionally biased region" description="Polar residues" evidence="7">
    <location>
        <begin position="1314"/>
        <end position="1324"/>
    </location>
</feature>
<feature type="binding site" evidence="4">
    <location>
        <position position="1179"/>
    </location>
    <ligand>
        <name>Zn(2+)</name>
        <dbReference type="ChEBI" id="CHEBI:29105"/>
        <label>1</label>
    </ligand>
</feature>
<feature type="binding site" evidence="4">
    <location>
        <position position="1182"/>
    </location>
    <ligand>
        <name>Zn(2+)</name>
        <dbReference type="ChEBI" id="CHEBI:29105"/>
        <label>1</label>
    </ligand>
</feature>
<feature type="binding site" evidence="4">
    <location>
        <position position="1195"/>
    </location>
    <ligand>
        <name>Zn(2+)</name>
        <dbReference type="ChEBI" id="CHEBI:29105"/>
        <label>2</label>
    </ligand>
</feature>
<feature type="binding site" evidence="4">
    <location>
        <position position="1198"/>
    </location>
    <ligand>
        <name>Zn(2+)</name>
        <dbReference type="ChEBI" id="CHEBI:29105"/>
        <label>2</label>
    </ligand>
</feature>
<feature type="binding site" evidence="4">
    <location>
        <position position="1203"/>
    </location>
    <ligand>
        <name>Zn(2+)</name>
        <dbReference type="ChEBI" id="CHEBI:29105"/>
        <label>1</label>
    </ligand>
</feature>
<feature type="binding site" evidence="4">
    <location>
        <position position="1206"/>
    </location>
    <ligand>
        <name>Zn(2+)</name>
        <dbReference type="ChEBI" id="CHEBI:29105"/>
        <label>1</label>
    </ligand>
</feature>
<feature type="binding site" evidence="4">
    <location>
        <position position="1223"/>
    </location>
    <ligand>
        <name>Zn(2+)</name>
        <dbReference type="ChEBI" id="CHEBI:29105"/>
        <label>2</label>
    </ligand>
</feature>
<feature type="binding site" evidence="4">
    <location>
        <position position="1226"/>
    </location>
    <ligand>
        <name>Zn(2+)</name>
        <dbReference type="ChEBI" id="CHEBI:29105"/>
        <label>2</label>
    </ligand>
</feature>
<feature type="modified residue" description="N-acetylalanine" evidence="19 20 21">
    <location>
        <position position="2"/>
    </location>
</feature>
<feature type="modified residue" description="Phosphoserine" evidence="22">
    <location>
        <position position="196"/>
    </location>
</feature>
<feature type="modified residue" description="Phosphoserine" evidence="23">
    <location>
        <position position="342"/>
    </location>
</feature>
<feature type="modified residue" description="Phosphothreonine" evidence="2">
    <location>
        <position position="381"/>
    </location>
</feature>
<feature type="modified residue" description="Phosphoserine" evidence="18">
    <location>
        <position position="878"/>
    </location>
</feature>
<feature type="splice variant" id="VSP_019795" description="In isoform 2." evidence="16">
    <original>QQKAD</original>
    <variation>LHVGD</variation>
    <location>
        <begin position="376"/>
        <end position="380"/>
    </location>
</feature>
<feature type="splice variant" id="VSP_019796" description="In isoform 3." evidence="15">
    <original>QQKAD</original>
    <variation>HLSE</variation>
    <location>
        <begin position="376"/>
        <end position="380"/>
    </location>
</feature>
<feature type="splice variant" id="VSP_019797" description="In isoform 2 and isoform 3." evidence="15 16">
    <location>
        <begin position="381"/>
        <end position="1478"/>
    </location>
</feature>
<feature type="splice variant" id="VSP_054477" description="In isoform 4." evidence="16">
    <original>Q</original>
    <variation>QASVGASKGLGNLLCESSACR</variation>
    <location>
        <position position="1315"/>
    </location>
</feature>
<feature type="sequence variant" id="VAR_027006" description="In dbSNP:rs4683158." evidence="8 9 10 11">
    <original>R</original>
    <variation>Q</variation>
    <location>
        <position position="250"/>
    </location>
</feature>
<feature type="sequence variant" id="VAR_084824" description="In CTRCT18; uncertain significance." evidence="14">
    <location>
        <begin position="270"/>
        <end position="1478"/>
    </location>
</feature>
<feature type="sequence variant" id="VAR_027007" description="In dbSNP:rs9875356.">
    <original>R</original>
    <variation>H</variation>
    <location>
        <position position="282"/>
    </location>
</feature>
<feature type="sequence variant" id="VAR_027008" description="In dbSNP:rs3733100." evidence="8 9 10 11">
    <original>G</original>
    <variation>A</variation>
    <location>
        <position position="321"/>
    </location>
</feature>
<feature type="sequence variant" id="VAR_027009" description="In dbSNP:rs3733101.">
    <original>T</original>
    <variation>M</variation>
    <location>
        <position position="381"/>
    </location>
</feature>
<feature type="sequence variant" id="VAR_056882" description="In dbSNP:rs33910087.">
    <original>R</original>
    <variation>C</variation>
    <location>
        <position position="447"/>
    </location>
</feature>
<feature type="sequence variant" id="VAR_027010" description="In dbSNP:rs3796375." evidence="11">
    <original>A</original>
    <variation>V</variation>
    <location>
        <position position="679"/>
    </location>
</feature>
<feature type="sequence variant" id="VAR_056883" description="In dbSNP:rs34801630.">
    <original>E</original>
    <variation>K</variation>
    <location>
        <position position="994"/>
    </location>
</feature>
<feature type="sequence variant" id="VAR_027011" description="In dbSNP:rs13059238.">
    <original>N</original>
    <variation>D</variation>
    <location>
        <position position="1001"/>
    </location>
</feature>
<feature type="sequence variant" id="VAR_065974" description="In CTRCT18; dbSNP:rs387906965." evidence="13">
    <original>L</original>
    <variation>P</variation>
    <location>
        <position position="1376"/>
    </location>
</feature>
<feature type="sequence conflict" description="In Ref. 2; CAD91151." evidence="17" ref="2">
    <original>Y</original>
    <variation>C</variation>
    <location>
        <position position="155"/>
    </location>
</feature>
<feature type="sequence conflict" description="In Ref. 2; CAD91151." evidence="17" ref="2">
    <original>D</original>
    <variation>G</variation>
    <location>
        <position position="359"/>
    </location>
</feature>
<feature type="sequence conflict" description="In Ref. 5; BAB14559." evidence="17" ref="5">
    <original>L</original>
    <variation>S</variation>
    <location>
        <position position="365"/>
    </location>
</feature>
<feature type="sequence conflict" description="In Ref. 1; CAC33883." evidence="17" ref="1">
    <original>T</original>
    <variation>S</variation>
    <location>
        <position position="381"/>
    </location>
</feature>
<feature type="sequence conflict" description="In Ref. 2; CAD89924." evidence="17" ref="2">
    <original>T</original>
    <variation>I</variation>
    <location>
        <position position="916"/>
    </location>
</feature>
<feature type="sequence conflict" description="In Ref. 2; CAD89924." evidence="17" ref="2">
    <original>K</original>
    <variation>E</variation>
    <location>
        <position position="964"/>
    </location>
</feature>
<feature type="sequence conflict" description="In Ref. 1; CAC33883." evidence="17" ref="1">
    <original>A</original>
    <variation>P</variation>
    <location>
        <position position="1382"/>
    </location>
</feature>
<feature type="sequence conflict" description="In Ref. 1; CAC33883." evidence="17" ref="1">
    <original>G</original>
    <variation>A</variation>
    <location>
        <position position="1385"/>
    </location>
</feature>
<feature type="helix" evidence="26">
    <location>
        <begin position="6"/>
        <end position="31"/>
    </location>
</feature>
<feature type="helix" evidence="26">
    <location>
        <begin position="40"/>
        <end position="54"/>
    </location>
</feature>
<feature type="helix" evidence="26">
    <location>
        <begin position="70"/>
        <end position="78"/>
    </location>
</feature>
<feature type="strand" evidence="26">
    <location>
        <begin position="79"/>
        <end position="81"/>
    </location>
</feature>
<feature type="helix" evidence="26">
    <location>
        <begin position="86"/>
        <end position="92"/>
    </location>
</feature>
<feature type="helix" evidence="26">
    <location>
        <begin position="100"/>
        <end position="113"/>
    </location>
</feature>
<feature type="helix" evidence="26">
    <location>
        <begin position="117"/>
        <end position="126"/>
    </location>
</feature>
<feature type="helix" evidence="26">
    <location>
        <begin position="128"/>
        <end position="134"/>
    </location>
</feature>
<feature type="helix" evidence="26">
    <location>
        <begin position="140"/>
        <end position="142"/>
    </location>
</feature>
<feature type="helix" evidence="26">
    <location>
        <begin position="144"/>
        <end position="158"/>
    </location>
</feature>
<feature type="strand" evidence="26">
    <location>
        <begin position="166"/>
        <end position="169"/>
    </location>
</feature>
<feature type="turn" evidence="26">
    <location>
        <begin position="171"/>
        <end position="173"/>
    </location>
</feature>
<feature type="strand" evidence="24">
    <location>
        <begin position="1276"/>
        <end position="1282"/>
    </location>
</feature>
<feature type="helix" evidence="25">
    <location>
        <begin position="1285"/>
        <end position="1287"/>
    </location>
</feature>
<dbReference type="EMBL" id="AJ292348">
    <property type="protein sequence ID" value="CAC33883.1"/>
    <property type="molecule type" value="mRNA"/>
</dbReference>
<dbReference type="EMBL" id="AL833308">
    <property type="protein sequence ID" value="CAD89924.1"/>
    <property type="molecule type" value="mRNA"/>
</dbReference>
<dbReference type="EMBL" id="AL832358">
    <property type="protein sequence ID" value="CAD91151.1"/>
    <property type="molecule type" value="mRNA"/>
</dbReference>
<dbReference type="EMBL" id="AC099782">
    <property type="status" value="NOT_ANNOTATED_CDS"/>
    <property type="molecule type" value="Genomic_DNA"/>
</dbReference>
<dbReference type="EMBL" id="BC007218">
    <property type="protein sequence ID" value="AAH07218.1"/>
    <property type="status" value="ALT_INIT"/>
    <property type="molecule type" value="mRNA"/>
</dbReference>
<dbReference type="EMBL" id="BC101468">
    <property type="protein sequence ID" value="AAI01469.1"/>
    <property type="molecule type" value="mRNA"/>
</dbReference>
<dbReference type="EMBL" id="BC101470">
    <property type="protein sequence ID" value="AAI01471.1"/>
    <property type="molecule type" value="mRNA"/>
</dbReference>
<dbReference type="EMBL" id="BC143368">
    <property type="protein sequence ID" value="AAI43369.1"/>
    <property type="molecule type" value="mRNA"/>
</dbReference>
<dbReference type="EMBL" id="AK023397">
    <property type="protein sequence ID" value="BAB14559.1"/>
    <property type="status" value="ALT_INIT"/>
    <property type="molecule type" value="mRNA"/>
</dbReference>
<dbReference type="EMBL" id="AK074165">
    <property type="protein sequence ID" value="BAB84991.1"/>
    <property type="status" value="ALT_FRAME"/>
    <property type="molecule type" value="mRNA"/>
</dbReference>
<dbReference type="CCDS" id="CCDS2734.1">
    <molecule id="Q9BQS8-1"/>
</dbReference>
<dbReference type="RefSeq" id="NP_001373350.1">
    <molecule id="Q9BQS8-1"/>
    <property type="nucleotide sequence ID" value="NM_001386421.1"/>
</dbReference>
<dbReference type="RefSeq" id="NP_001373351.1">
    <molecule id="Q9BQS8-1"/>
    <property type="nucleotide sequence ID" value="NM_001386422.1"/>
</dbReference>
<dbReference type="RefSeq" id="NP_078789.2">
    <molecule id="Q9BQS8-1"/>
    <property type="nucleotide sequence ID" value="NM_024513.4"/>
</dbReference>
<dbReference type="RefSeq" id="XP_006713396.1">
    <property type="nucleotide sequence ID" value="XM_006713333.3"/>
</dbReference>
<dbReference type="RefSeq" id="XP_006713397.1">
    <property type="nucleotide sequence ID" value="XM_006713334.3"/>
</dbReference>
<dbReference type="RefSeq" id="XP_011532413.1">
    <property type="nucleotide sequence ID" value="XM_011534111.2"/>
</dbReference>
<dbReference type="RefSeq" id="XP_047304858.1">
    <molecule id="Q9BQS8-1"/>
    <property type="nucleotide sequence ID" value="XM_047448902.1"/>
</dbReference>
<dbReference type="RefSeq" id="XP_054203816.1">
    <molecule id="Q9BQS8-1"/>
    <property type="nucleotide sequence ID" value="XM_054347841.1"/>
</dbReference>
<dbReference type="PDB" id="5CX3">
    <property type="method" value="X-ray"/>
    <property type="resolution" value="2.30 A"/>
    <property type="chains" value="E/F/G/H=1273-1298"/>
</dbReference>
<dbReference type="PDB" id="5D94">
    <property type="method" value="X-ray"/>
    <property type="resolution" value="1.53 A"/>
    <property type="chains" value="B=1276-1288"/>
</dbReference>
<dbReference type="PDB" id="7BQI">
    <property type="method" value="X-ray"/>
    <property type="resolution" value="1.30 A"/>
    <property type="chains" value="A=1-178"/>
</dbReference>
<dbReference type="PDBsum" id="5CX3"/>
<dbReference type="PDBsum" id="5D94"/>
<dbReference type="PDBsum" id="7BQI"/>
<dbReference type="SMR" id="Q9BQS8"/>
<dbReference type="BioGRID" id="122669">
    <property type="interactions" value="113"/>
</dbReference>
<dbReference type="DIP" id="DIP-60600N"/>
<dbReference type="ELM" id="Q9BQS8"/>
<dbReference type="FunCoup" id="Q9BQS8">
    <property type="interactions" value="1360"/>
</dbReference>
<dbReference type="IntAct" id="Q9BQS8">
    <property type="interactions" value="90"/>
</dbReference>
<dbReference type="MINT" id="Q9BQS8"/>
<dbReference type="STRING" id="9606.ENSP00000296137"/>
<dbReference type="TCDB" id="9.B.17.2.4">
    <property type="family name" value="the vamp-associated protein (vap) family"/>
</dbReference>
<dbReference type="GlyGen" id="Q9BQS8">
    <property type="glycosylation" value="1 site, 1 O-linked glycan (1 site)"/>
</dbReference>
<dbReference type="iPTMnet" id="Q9BQS8"/>
<dbReference type="PhosphoSitePlus" id="Q9BQS8"/>
<dbReference type="SwissPalm" id="Q9BQS8"/>
<dbReference type="BioMuta" id="FYCO1"/>
<dbReference type="DMDM" id="322510128"/>
<dbReference type="jPOST" id="Q9BQS8"/>
<dbReference type="MassIVE" id="Q9BQS8"/>
<dbReference type="PaxDb" id="9606-ENSP00000296137"/>
<dbReference type="PeptideAtlas" id="Q9BQS8"/>
<dbReference type="ProteomicsDB" id="7193"/>
<dbReference type="ProteomicsDB" id="78718">
    <molecule id="Q9BQS8-1"/>
</dbReference>
<dbReference type="ProteomicsDB" id="78719">
    <molecule id="Q9BQS8-2"/>
</dbReference>
<dbReference type="ProteomicsDB" id="78720">
    <molecule id="Q9BQS8-3"/>
</dbReference>
<dbReference type="Pumba" id="Q9BQS8"/>
<dbReference type="Antibodypedia" id="29634">
    <property type="antibodies" value="152 antibodies from 25 providers"/>
</dbReference>
<dbReference type="DNASU" id="79443"/>
<dbReference type="Ensembl" id="ENST00000296137.7">
    <molecule id="Q9BQS8-1"/>
    <property type="protein sequence ID" value="ENSP00000296137.2"/>
    <property type="gene ID" value="ENSG00000163820.16"/>
</dbReference>
<dbReference type="GeneID" id="79443"/>
<dbReference type="KEGG" id="hsa:79443"/>
<dbReference type="MANE-Select" id="ENST00000296137.7">
    <property type="protein sequence ID" value="ENSP00000296137.2"/>
    <property type="RefSeq nucleotide sequence ID" value="NM_024513.4"/>
    <property type="RefSeq protein sequence ID" value="NP_078789.2"/>
</dbReference>
<dbReference type="UCSC" id="uc003cpb.6">
    <molecule id="Q9BQS8-1"/>
    <property type="organism name" value="human"/>
</dbReference>
<dbReference type="AGR" id="HGNC:14673"/>
<dbReference type="CTD" id="79443"/>
<dbReference type="DisGeNET" id="79443"/>
<dbReference type="GeneCards" id="FYCO1"/>
<dbReference type="HGNC" id="HGNC:14673">
    <property type="gene designation" value="FYCO1"/>
</dbReference>
<dbReference type="HPA" id="ENSG00000163820">
    <property type="expression patterns" value="Tissue enhanced (skeletal)"/>
</dbReference>
<dbReference type="MalaCards" id="FYCO1"/>
<dbReference type="MIM" id="607182">
    <property type="type" value="gene"/>
</dbReference>
<dbReference type="MIM" id="610019">
    <property type="type" value="phenotype"/>
</dbReference>
<dbReference type="neXtProt" id="NX_Q9BQS8"/>
<dbReference type="OpenTargets" id="ENSG00000163820"/>
<dbReference type="Orphanet" id="98991">
    <property type="disease" value="Early-onset nuclear cataract"/>
</dbReference>
<dbReference type="Orphanet" id="98994">
    <property type="disease" value="Total early-onset cataract"/>
</dbReference>
<dbReference type="PharmGKB" id="PA28453"/>
<dbReference type="VEuPathDB" id="HostDB:ENSG00000163820"/>
<dbReference type="eggNOG" id="KOG1729">
    <property type="taxonomic scope" value="Eukaryota"/>
</dbReference>
<dbReference type="GeneTree" id="ENSGT00940000154044"/>
<dbReference type="HOGENOM" id="CLU_004445_0_0_1"/>
<dbReference type="InParanoid" id="Q9BQS8"/>
<dbReference type="OMA" id="KERCCSD"/>
<dbReference type="OrthoDB" id="660555at2759"/>
<dbReference type="PAN-GO" id="Q9BQS8">
    <property type="GO annotations" value="5 GO annotations based on evolutionary models"/>
</dbReference>
<dbReference type="PhylomeDB" id="Q9BQS8"/>
<dbReference type="TreeFam" id="TF341788"/>
<dbReference type="PathwayCommons" id="Q9BQS8"/>
<dbReference type="SignaLink" id="Q9BQS8"/>
<dbReference type="SIGNOR" id="Q9BQS8"/>
<dbReference type="BioGRID-ORCS" id="79443">
    <property type="hits" value="4 hits in 1157 CRISPR screens"/>
</dbReference>
<dbReference type="ChiTaRS" id="FYCO1">
    <property type="organism name" value="human"/>
</dbReference>
<dbReference type="EvolutionaryTrace" id="Q9BQS8"/>
<dbReference type="GenomeRNAi" id="79443"/>
<dbReference type="Pharos" id="Q9BQS8">
    <property type="development level" value="Tbio"/>
</dbReference>
<dbReference type="PRO" id="PR:Q9BQS8"/>
<dbReference type="Proteomes" id="UP000005640">
    <property type="component" value="Chromosome 3"/>
</dbReference>
<dbReference type="RNAct" id="Q9BQS8">
    <property type="molecule type" value="protein"/>
</dbReference>
<dbReference type="Bgee" id="ENSG00000163820">
    <property type="expression patterns" value="Expressed in skeletal muscle tissue of rectus abdominis and 200 other cell types or tissues"/>
</dbReference>
<dbReference type="ExpressionAtlas" id="Q9BQS8">
    <property type="expression patterns" value="baseline and differential"/>
</dbReference>
<dbReference type="GO" id="GO:0005776">
    <property type="term" value="C:autophagosome"/>
    <property type="evidence" value="ECO:0000314"/>
    <property type="project" value="UniProtKB"/>
</dbReference>
<dbReference type="GO" id="GO:0005794">
    <property type="term" value="C:Golgi apparatus"/>
    <property type="evidence" value="ECO:0000314"/>
    <property type="project" value="HPA"/>
</dbReference>
<dbReference type="GO" id="GO:0043231">
    <property type="term" value="C:intracellular membrane-bounded organelle"/>
    <property type="evidence" value="ECO:0000314"/>
    <property type="project" value="HPA"/>
</dbReference>
<dbReference type="GO" id="GO:0005770">
    <property type="term" value="C:late endosome"/>
    <property type="evidence" value="ECO:0000314"/>
    <property type="project" value="UniProtKB"/>
</dbReference>
<dbReference type="GO" id="GO:0005764">
    <property type="term" value="C:lysosome"/>
    <property type="evidence" value="ECO:0000314"/>
    <property type="project" value="UniProtKB"/>
</dbReference>
<dbReference type="GO" id="GO:0016020">
    <property type="term" value="C:membrane"/>
    <property type="evidence" value="ECO:0007005"/>
    <property type="project" value="UniProtKB"/>
</dbReference>
<dbReference type="GO" id="GO:0008270">
    <property type="term" value="F:zinc ion binding"/>
    <property type="evidence" value="ECO:0007669"/>
    <property type="project" value="UniProtKB-KW"/>
</dbReference>
<dbReference type="GO" id="GO:0072383">
    <property type="term" value="P:plus-end-directed vesicle transport along microtubule"/>
    <property type="evidence" value="ECO:0000315"/>
    <property type="project" value="UniProtKB"/>
</dbReference>
<dbReference type="GO" id="GO:1901098">
    <property type="term" value="P:positive regulation of autophagosome maturation"/>
    <property type="evidence" value="ECO:0000315"/>
    <property type="project" value="ParkinsonsUK-UCL"/>
</dbReference>
<dbReference type="CDD" id="cd15726">
    <property type="entry name" value="FYVE_FYCO1"/>
    <property type="match status" value="1"/>
</dbReference>
<dbReference type="CDD" id="cd17698">
    <property type="entry name" value="RUN_FYCO1"/>
    <property type="match status" value="1"/>
</dbReference>
<dbReference type="FunFam" id="1.20.58.900:FF:000010">
    <property type="entry name" value="FYVE and coiled-coil domain containing 1"/>
    <property type="match status" value="1"/>
</dbReference>
<dbReference type="FunFam" id="2.60.120.680:FF:000004">
    <property type="entry name" value="FYVE and coiled-coil domain containing 1"/>
    <property type="match status" value="1"/>
</dbReference>
<dbReference type="FunFam" id="3.30.40.10:FF:000341">
    <property type="entry name" value="FYVE and coiled-coil domain containing 1"/>
    <property type="match status" value="1"/>
</dbReference>
<dbReference type="Gene3D" id="1.20.58.900">
    <property type="match status" value="1"/>
</dbReference>
<dbReference type="Gene3D" id="2.60.120.680">
    <property type="entry name" value="GOLD domain"/>
    <property type="match status" value="1"/>
</dbReference>
<dbReference type="Gene3D" id="3.30.40.10">
    <property type="entry name" value="Zinc/RING finger domain, C3HC4 (zinc finger)"/>
    <property type="match status" value="1"/>
</dbReference>
<dbReference type="InterPro" id="IPR047337">
    <property type="entry name" value="FYVE_FYCO1"/>
</dbReference>
<dbReference type="InterPro" id="IPR009038">
    <property type="entry name" value="GOLD_dom"/>
</dbReference>
<dbReference type="InterPro" id="IPR036598">
    <property type="entry name" value="GOLD_dom_sf"/>
</dbReference>
<dbReference type="InterPro" id="IPR004012">
    <property type="entry name" value="Run_dom"/>
</dbReference>
<dbReference type="InterPro" id="IPR037213">
    <property type="entry name" value="Run_dom_sf"/>
</dbReference>
<dbReference type="InterPro" id="IPR047336">
    <property type="entry name" value="RUN_FYCO1"/>
</dbReference>
<dbReference type="InterPro" id="IPR000306">
    <property type="entry name" value="Znf_FYVE"/>
</dbReference>
<dbReference type="InterPro" id="IPR017455">
    <property type="entry name" value="Znf_FYVE-rel"/>
</dbReference>
<dbReference type="InterPro" id="IPR011011">
    <property type="entry name" value="Znf_FYVE_PHD"/>
</dbReference>
<dbReference type="InterPro" id="IPR013083">
    <property type="entry name" value="Znf_RING/FYVE/PHD"/>
</dbReference>
<dbReference type="PANTHER" id="PTHR46753">
    <property type="entry name" value="FYVE AND COILED-COIL DOMAIN-CONTAINING PROTEIN 1"/>
    <property type="match status" value="1"/>
</dbReference>
<dbReference type="PANTHER" id="PTHR46753:SF2">
    <property type="entry name" value="FYVE AND COILED-COIL DOMAIN-CONTAINING PROTEIN 1"/>
    <property type="match status" value="1"/>
</dbReference>
<dbReference type="Pfam" id="PF01363">
    <property type="entry name" value="FYVE"/>
    <property type="match status" value="1"/>
</dbReference>
<dbReference type="Pfam" id="PF02759">
    <property type="entry name" value="RUN"/>
    <property type="match status" value="1"/>
</dbReference>
<dbReference type="SMART" id="SM00064">
    <property type="entry name" value="FYVE"/>
    <property type="match status" value="1"/>
</dbReference>
<dbReference type="SUPFAM" id="SSF57903">
    <property type="entry name" value="FYVE/PHD zinc finger"/>
    <property type="match status" value="1"/>
</dbReference>
<dbReference type="SUPFAM" id="SSF140741">
    <property type="entry name" value="RUN domain-like"/>
    <property type="match status" value="1"/>
</dbReference>
<dbReference type="SUPFAM" id="SSF101576">
    <property type="entry name" value="Supernatant protein factor (SPF), C-terminal domain"/>
    <property type="match status" value="1"/>
</dbReference>
<dbReference type="PROSITE" id="PS50866">
    <property type="entry name" value="GOLD"/>
    <property type="match status" value="1"/>
</dbReference>
<dbReference type="PROSITE" id="PS50826">
    <property type="entry name" value="RUN"/>
    <property type="match status" value="1"/>
</dbReference>
<dbReference type="PROSITE" id="PS50178">
    <property type="entry name" value="ZF_FYVE"/>
    <property type="match status" value="1"/>
</dbReference>
<protein>
    <recommendedName>
        <fullName>FYVE and coiled-coil domain-containing protein 1</fullName>
    </recommendedName>
    <alternativeName>
        <fullName>Zinc finger FYVE domain-containing protein 7</fullName>
    </alternativeName>
</protein>
<name>FYCO1_HUMAN</name>
<accession>Q9BQS8</accession>
<accession>B7ZKT7</accession>
<accession>Q3MJE6</accession>
<accession>Q86T41</accession>
<accession>Q86TB1</accession>
<accession>Q8TEF9</accession>
<accession>Q96IV5</accession>
<accession>Q9H8P9</accession>
<organism>
    <name type="scientific">Homo sapiens</name>
    <name type="common">Human</name>
    <dbReference type="NCBI Taxonomy" id="9606"/>
    <lineage>
        <taxon>Eukaryota</taxon>
        <taxon>Metazoa</taxon>
        <taxon>Chordata</taxon>
        <taxon>Craniata</taxon>
        <taxon>Vertebrata</taxon>
        <taxon>Euteleostomi</taxon>
        <taxon>Mammalia</taxon>
        <taxon>Eutheria</taxon>
        <taxon>Euarchontoglires</taxon>
        <taxon>Primates</taxon>
        <taxon>Haplorrhini</taxon>
        <taxon>Catarrhini</taxon>
        <taxon>Hominidae</taxon>
        <taxon>Homo</taxon>
    </lineage>
</organism>
<keyword id="KW-0002">3D-structure</keyword>
<keyword id="KW-0007">Acetylation</keyword>
<keyword id="KW-0025">Alternative splicing</keyword>
<keyword id="KW-0898">Cataract</keyword>
<keyword id="KW-0175">Coiled coil</keyword>
<keyword id="KW-0968">Cytoplasmic vesicle</keyword>
<keyword id="KW-0225">Disease variant</keyword>
<keyword id="KW-0967">Endosome</keyword>
<keyword id="KW-0458">Lysosome</keyword>
<keyword id="KW-0479">Metal-binding</keyword>
<keyword id="KW-0597">Phosphoprotein</keyword>
<keyword id="KW-1267">Proteomics identification</keyword>
<keyword id="KW-1185">Reference proteome</keyword>
<keyword id="KW-0862">Zinc</keyword>
<keyword id="KW-0863">Zinc-finger</keyword>
<comment type="function">
    <text evidence="12">May mediate microtubule plus end-directed vesicle transport.</text>
</comment>
<comment type="subunit">
    <text evidence="1">Can form homodimers. Interacts (via C-terminus) with MAP1LC3B. Interacts with RAB7A; the interaction with RAB7A induces FYCO1 recruitment to late endosomal/lysosomal compartments. Interacts with MAP1LC3B (By similarity).</text>
</comment>
<comment type="interaction">
    <interactant intactId="EBI-2869338">
        <id>Q9BQS8</id>
    </interactant>
    <interactant intactId="EBI-712001">
        <id>O95166</id>
        <label>GABARAP</label>
    </interactant>
    <organismsDiffer>false</organismsDiffer>
    <experiments>2</experiments>
</comment>
<comment type="interaction">
    <interactant intactId="EBI-2869338">
        <id>Q9BQS8</id>
    </interactant>
    <interactant intactId="EBI-746969">
        <id>Q9H0R8</id>
        <label>GABARAPL1</label>
    </interactant>
    <organismsDiffer>false</organismsDiffer>
    <experiments>2</experiments>
</comment>
<comment type="interaction">
    <interactant intactId="EBI-2869338">
        <id>Q9BQS8</id>
    </interactant>
    <interactant intactId="EBI-720116">
        <id>P60520</id>
        <label>GABARAPL2</label>
    </interactant>
    <organismsDiffer>false</organismsDiffer>
    <experiments>2</experiments>
</comment>
<comment type="interaction">
    <interactant intactId="EBI-2869338">
        <id>Q9BQS8</id>
    </interactant>
    <interactant intactId="EBI-710124">
        <id>O60341</id>
        <label>KDM1A</label>
    </interactant>
    <organismsDiffer>false</organismsDiffer>
    <experiments>2</experiments>
</comment>
<comment type="interaction">
    <interactant intactId="EBI-2869338">
        <id>Q9BQS8</id>
    </interactant>
    <interactant intactId="EBI-355878">
        <id>P33176</id>
        <label>KIF5B</label>
    </interactant>
    <organismsDiffer>false</organismsDiffer>
    <experiments>3</experiments>
</comment>
<comment type="interaction">
    <interactant intactId="EBI-2869338">
        <id>Q9BQS8</id>
    </interactant>
    <interactant intactId="EBI-726994">
        <id>Q9H0B6</id>
        <label>KLC2</label>
    </interactant>
    <organismsDiffer>false</organismsDiffer>
    <experiments>2</experiments>
</comment>
<comment type="interaction">
    <interactant intactId="EBI-2869338">
        <id>Q9BQS8</id>
    </interactant>
    <interactant intactId="EBI-373144">
        <id>Q9GZQ8</id>
        <label>MAP1LC3B</label>
    </interactant>
    <organismsDiffer>false</organismsDiffer>
    <experiments>9</experiments>
</comment>
<comment type="interaction">
    <interactant intactId="EBI-2869338">
        <id>Q9BQS8</id>
    </interactant>
    <interactant intactId="EBI-2603996">
        <id>Q9BXW4</id>
        <label>MAP1LC3C</label>
    </interactant>
    <organismsDiffer>false</organismsDiffer>
    <experiments>2</experiments>
</comment>
<comment type="interaction">
    <interactant intactId="EBI-2869338">
        <id>Q9BQS8</id>
    </interactant>
    <interactant intactId="EBI-912440">
        <id>Q96LA8</id>
        <label>PRMT6</label>
    </interactant>
    <organismsDiffer>false</organismsDiffer>
    <experiments>2</experiments>
</comment>
<comment type="interaction">
    <interactant intactId="EBI-2869338">
        <id>Q9BQS8</id>
    </interactant>
    <interactant intactId="EBI-25475888">
        <id>PRO_0000449630</id>
        <label>rep</label>
        <dbReference type="UniProtKB" id="P0DTD1"/>
    </interactant>
    <organismsDiffer>true</organismsDiffer>
    <experiments>3</experiments>
</comment>
<comment type="interaction">
    <interactant intactId="EBI-25905795">
        <id>Q9BQS8-2</id>
    </interactant>
    <interactant intactId="EBI-12593112">
        <id>O75190-2</id>
        <label>DNAJB6</label>
    </interactant>
    <organismsDiffer>false</organismsDiffer>
    <experiments>3</experiments>
</comment>
<comment type="interaction">
    <interactant intactId="EBI-25905795">
        <id>Q9BQS8-2</id>
    </interactant>
    <interactant intactId="EBI-948266">
        <id>O14901</id>
        <label>KLF11</label>
    </interactant>
    <organismsDiffer>false</organismsDiffer>
    <experiments>3</experiments>
</comment>
<comment type="interaction">
    <interactant intactId="EBI-25905795">
        <id>Q9BQS8-2</id>
    </interactant>
    <interactant intactId="EBI-2811583">
        <id>Q9BVL2</id>
        <label>NUP58</label>
    </interactant>
    <organismsDiffer>false</organismsDiffer>
    <experiments>3</experiments>
</comment>
<comment type="subcellular location">
    <subcellularLocation>
        <location>Cytoplasmic vesicle</location>
        <location>Autophagosome</location>
    </subcellularLocation>
    <subcellularLocation>
        <location>Endosome</location>
    </subcellularLocation>
    <subcellularLocation>
        <location>Lysosome</location>
    </subcellularLocation>
    <text>Localizes to the external but not to the internal membrane of autophagosomes, and upon autophagosome/late endosome/lysosome fusion, it stays on the external surface of autolysosomes.</text>
</comment>
<comment type="alternative products">
    <event type="alternative splicing"/>
    <isoform>
        <id>Q9BQS8-1</id>
        <name>1</name>
        <sequence type="displayed"/>
    </isoform>
    <isoform>
        <id>Q9BQS8-2</id>
        <name>2</name>
        <sequence type="described" ref="VSP_019795 VSP_019797"/>
    </isoform>
    <isoform>
        <id>Q9BQS8-3</id>
        <name>3</name>
        <sequence type="described" ref="VSP_019796 VSP_019797"/>
    </isoform>
    <isoform>
        <id>Q9BQS8-4</id>
        <name>4</name>
        <sequence type="described" ref="VSP_054477"/>
    </isoform>
</comment>
<comment type="tissue specificity">
    <text evidence="8">Expressed in heart and skeletal muscle.</text>
</comment>
<comment type="disease" evidence="13">
    <disease id="DI-03191">
        <name>Cataract 18</name>
        <acronym>CTRCT18</acronym>
        <description>An opacification of the crystalline lens of the eye becoming evident at birth or in infancy. It frequently results in visual impairment or blindness. Opacities vary in morphology, are often confined to a portion of the lens, and may be static or progressive. In general, the more posteriorly located and dense an opacity, the greater the impact on visual function.</description>
        <dbReference type="MIM" id="610019"/>
    </disease>
    <text evidence="13 14">The disease is caused by variants affecting the gene represented in this entry. Pathogenic mutations in FYCO1 can affect intracellular transport of autophagocytic vesicles from the perinuclear area to the periphery, leading to an accumulation of large numbers of vesicles and hence loss of lens transparency (PubMed:21636066).</text>
</comment>
<comment type="sequence caution" evidence="17">
    <conflict type="erroneous initiation">
        <sequence resource="EMBL-CDS" id="AAH07218"/>
    </conflict>
    <text>Truncated N-terminus.</text>
</comment>
<comment type="sequence caution" evidence="17">
    <conflict type="erroneous initiation">
        <sequence resource="EMBL-CDS" id="BAB14559"/>
    </conflict>
    <text>Truncated N-terminus.</text>
</comment>
<comment type="sequence caution" evidence="17">
    <conflict type="frameshift">
        <sequence resource="EMBL-CDS" id="BAB84991"/>
    </conflict>
</comment>
<proteinExistence type="evidence at protein level"/>
<reference key="1">
    <citation type="journal article" date="2002" name="Eur. J. Hum. Genet.">
        <title>The transcriptional map of the common eliminated region 1 (C3CER1) in 3p21.3.</title>
        <authorList>
            <person name="Kiss H."/>
            <person name="Yang Y."/>
            <person name="Kiss C."/>
            <person name="Andersson K."/>
            <person name="Klein G."/>
            <person name="Imreh S."/>
            <person name="Dumanski J.P."/>
        </authorList>
    </citation>
    <scope>NUCLEOTIDE SEQUENCE [MRNA] (ISOFORM 1)</scope>
    <scope>TISSUE SPECIFICITY</scope>
    <scope>VARIANTS GLN-250 AND ALA-321</scope>
</reference>
<reference key="2">
    <citation type="journal article" date="2007" name="BMC Genomics">
        <title>The full-ORF clone resource of the German cDNA consortium.</title>
        <authorList>
            <person name="Bechtel S."/>
            <person name="Rosenfelder H."/>
            <person name="Duda A."/>
            <person name="Schmidt C.P."/>
            <person name="Ernst U."/>
            <person name="Wellenreuther R."/>
            <person name="Mehrle A."/>
            <person name="Schuster C."/>
            <person name="Bahr A."/>
            <person name="Bloecker H."/>
            <person name="Heubner D."/>
            <person name="Hoerlein A."/>
            <person name="Michel G."/>
            <person name="Wedler H."/>
            <person name="Koehrer K."/>
            <person name="Ottenwaelder B."/>
            <person name="Poustka A."/>
            <person name="Wiemann S."/>
            <person name="Schupp I."/>
        </authorList>
    </citation>
    <scope>NUCLEOTIDE SEQUENCE [LARGE SCALE MRNA] (ISOFORM 1)</scope>
    <scope>VARIANTS GLN-250; ALA-321 AND VAL-679</scope>
    <source>
        <tissue>Skeletal muscle</tissue>
    </source>
</reference>
<reference key="3">
    <citation type="journal article" date="2006" name="Nature">
        <title>The DNA sequence, annotation and analysis of human chromosome 3.</title>
        <authorList>
            <person name="Muzny D.M."/>
            <person name="Scherer S.E."/>
            <person name="Kaul R."/>
            <person name="Wang J."/>
            <person name="Yu J."/>
            <person name="Sudbrak R."/>
            <person name="Buhay C.J."/>
            <person name="Chen R."/>
            <person name="Cree A."/>
            <person name="Ding Y."/>
            <person name="Dugan-Rocha S."/>
            <person name="Gill R."/>
            <person name="Gunaratne P."/>
            <person name="Harris R.A."/>
            <person name="Hawes A.C."/>
            <person name="Hernandez J."/>
            <person name="Hodgson A.V."/>
            <person name="Hume J."/>
            <person name="Jackson A."/>
            <person name="Khan Z.M."/>
            <person name="Kovar-Smith C."/>
            <person name="Lewis L.R."/>
            <person name="Lozado R.J."/>
            <person name="Metzker M.L."/>
            <person name="Milosavljevic A."/>
            <person name="Miner G.R."/>
            <person name="Morgan M.B."/>
            <person name="Nazareth L.V."/>
            <person name="Scott G."/>
            <person name="Sodergren E."/>
            <person name="Song X.-Z."/>
            <person name="Steffen D."/>
            <person name="Wei S."/>
            <person name="Wheeler D.A."/>
            <person name="Wright M.W."/>
            <person name="Worley K.C."/>
            <person name="Yuan Y."/>
            <person name="Zhang Z."/>
            <person name="Adams C.Q."/>
            <person name="Ansari-Lari M.A."/>
            <person name="Ayele M."/>
            <person name="Brown M.J."/>
            <person name="Chen G."/>
            <person name="Chen Z."/>
            <person name="Clendenning J."/>
            <person name="Clerc-Blankenburg K.P."/>
            <person name="Chen R."/>
            <person name="Chen Z."/>
            <person name="Davis C."/>
            <person name="Delgado O."/>
            <person name="Dinh H.H."/>
            <person name="Dong W."/>
            <person name="Draper H."/>
            <person name="Ernst S."/>
            <person name="Fu G."/>
            <person name="Gonzalez-Garay M.L."/>
            <person name="Garcia D.K."/>
            <person name="Gillett W."/>
            <person name="Gu J."/>
            <person name="Hao B."/>
            <person name="Haugen E."/>
            <person name="Havlak P."/>
            <person name="He X."/>
            <person name="Hennig S."/>
            <person name="Hu S."/>
            <person name="Huang W."/>
            <person name="Jackson L.R."/>
            <person name="Jacob L.S."/>
            <person name="Kelly S.H."/>
            <person name="Kube M."/>
            <person name="Levy R."/>
            <person name="Li Z."/>
            <person name="Liu B."/>
            <person name="Liu J."/>
            <person name="Liu W."/>
            <person name="Lu J."/>
            <person name="Maheshwari M."/>
            <person name="Nguyen B.-V."/>
            <person name="Okwuonu G.O."/>
            <person name="Palmeiri A."/>
            <person name="Pasternak S."/>
            <person name="Perez L.M."/>
            <person name="Phelps K.A."/>
            <person name="Plopper F.J."/>
            <person name="Qiang B."/>
            <person name="Raymond C."/>
            <person name="Rodriguez R."/>
            <person name="Saenphimmachak C."/>
            <person name="Santibanez J."/>
            <person name="Shen H."/>
            <person name="Shen Y."/>
            <person name="Subramanian S."/>
            <person name="Tabor P.E."/>
            <person name="Verduzco D."/>
            <person name="Waldron L."/>
            <person name="Wang J."/>
            <person name="Wang J."/>
            <person name="Wang Q."/>
            <person name="Williams G.A."/>
            <person name="Wong G.K.-S."/>
            <person name="Yao Z."/>
            <person name="Zhang J."/>
            <person name="Zhang X."/>
            <person name="Zhao G."/>
            <person name="Zhou J."/>
            <person name="Zhou Y."/>
            <person name="Nelson D."/>
            <person name="Lehrach H."/>
            <person name="Reinhardt R."/>
            <person name="Naylor S.L."/>
            <person name="Yang H."/>
            <person name="Olson M."/>
            <person name="Weinstock G."/>
            <person name="Gibbs R.A."/>
        </authorList>
    </citation>
    <scope>NUCLEOTIDE SEQUENCE [LARGE SCALE GENOMIC DNA]</scope>
</reference>
<reference key="4">
    <citation type="journal article" date="2004" name="Genome Res.">
        <title>The status, quality, and expansion of the NIH full-length cDNA project: the Mammalian Gene Collection (MGC).</title>
        <authorList>
            <consortium name="The MGC Project Team"/>
        </authorList>
    </citation>
    <scope>NUCLEOTIDE SEQUENCE [LARGE SCALE MRNA] (ISOFORMS 1 AND 4)</scope>
    <scope>NUCLEOTIDE SEQUENCE [LARGE SCALE MRNA] OF 41-1478 (ISOFORM 2)</scope>
    <scope>VARIANTS GLN-250 AND ALA-321</scope>
    <source>
        <tissue>Heart</tissue>
        <tissue>Lung</tissue>
        <tissue>Skin</tissue>
    </source>
</reference>
<reference key="5">
    <citation type="journal article" date="2004" name="Nat. Genet.">
        <title>Complete sequencing and characterization of 21,243 full-length human cDNAs.</title>
        <authorList>
            <person name="Ota T."/>
            <person name="Suzuki Y."/>
            <person name="Nishikawa T."/>
            <person name="Otsuki T."/>
            <person name="Sugiyama T."/>
            <person name="Irie R."/>
            <person name="Wakamatsu A."/>
            <person name="Hayashi K."/>
            <person name="Sato H."/>
            <person name="Nagai K."/>
            <person name="Kimura K."/>
            <person name="Makita H."/>
            <person name="Sekine M."/>
            <person name="Obayashi M."/>
            <person name="Nishi T."/>
            <person name="Shibahara T."/>
            <person name="Tanaka T."/>
            <person name="Ishii S."/>
            <person name="Yamamoto J."/>
            <person name="Saito K."/>
            <person name="Kawai Y."/>
            <person name="Isono Y."/>
            <person name="Nakamura Y."/>
            <person name="Nagahari K."/>
            <person name="Murakami K."/>
            <person name="Yasuda T."/>
            <person name="Iwayanagi T."/>
            <person name="Wagatsuma M."/>
            <person name="Shiratori A."/>
            <person name="Sudo H."/>
            <person name="Hosoiri T."/>
            <person name="Kaku Y."/>
            <person name="Kodaira H."/>
            <person name="Kondo H."/>
            <person name="Sugawara M."/>
            <person name="Takahashi M."/>
            <person name="Kanda K."/>
            <person name="Yokoi T."/>
            <person name="Furuya T."/>
            <person name="Kikkawa E."/>
            <person name="Omura Y."/>
            <person name="Abe K."/>
            <person name="Kamihara K."/>
            <person name="Katsuta N."/>
            <person name="Sato K."/>
            <person name="Tanikawa M."/>
            <person name="Yamazaki M."/>
            <person name="Ninomiya K."/>
            <person name="Ishibashi T."/>
            <person name="Yamashita H."/>
            <person name="Murakawa K."/>
            <person name="Fujimori K."/>
            <person name="Tanai H."/>
            <person name="Kimata M."/>
            <person name="Watanabe M."/>
            <person name="Hiraoka S."/>
            <person name="Chiba Y."/>
            <person name="Ishida S."/>
            <person name="Ono Y."/>
            <person name="Takiguchi S."/>
            <person name="Watanabe S."/>
            <person name="Yosida M."/>
            <person name="Hotuta T."/>
            <person name="Kusano J."/>
            <person name="Kanehori K."/>
            <person name="Takahashi-Fujii A."/>
            <person name="Hara H."/>
            <person name="Tanase T.-O."/>
            <person name="Nomura Y."/>
            <person name="Togiya S."/>
            <person name="Komai F."/>
            <person name="Hara R."/>
            <person name="Takeuchi K."/>
            <person name="Arita M."/>
            <person name="Imose N."/>
            <person name="Musashino K."/>
            <person name="Yuuki H."/>
            <person name="Oshima A."/>
            <person name="Sasaki N."/>
            <person name="Aotsuka S."/>
            <person name="Yoshikawa Y."/>
            <person name="Matsunawa H."/>
            <person name="Ichihara T."/>
            <person name="Shiohata N."/>
            <person name="Sano S."/>
            <person name="Moriya S."/>
            <person name="Momiyama H."/>
            <person name="Satoh N."/>
            <person name="Takami S."/>
            <person name="Terashima Y."/>
            <person name="Suzuki O."/>
            <person name="Nakagawa S."/>
            <person name="Senoh A."/>
            <person name="Mizoguchi H."/>
            <person name="Goto Y."/>
            <person name="Shimizu F."/>
            <person name="Wakebe H."/>
            <person name="Hishigaki H."/>
            <person name="Watanabe T."/>
            <person name="Sugiyama A."/>
            <person name="Takemoto M."/>
            <person name="Kawakami B."/>
            <person name="Yamazaki M."/>
            <person name="Watanabe K."/>
            <person name="Kumagai A."/>
            <person name="Itakura S."/>
            <person name="Fukuzumi Y."/>
            <person name="Fujimori Y."/>
            <person name="Komiyama M."/>
            <person name="Tashiro H."/>
            <person name="Tanigami A."/>
            <person name="Fujiwara T."/>
            <person name="Ono T."/>
            <person name="Yamada K."/>
            <person name="Fujii Y."/>
            <person name="Ozaki K."/>
            <person name="Hirao M."/>
            <person name="Ohmori Y."/>
            <person name="Kawabata A."/>
            <person name="Hikiji T."/>
            <person name="Kobatake N."/>
            <person name="Inagaki H."/>
            <person name="Ikema Y."/>
            <person name="Okamoto S."/>
            <person name="Okitani R."/>
            <person name="Kawakami T."/>
            <person name="Noguchi S."/>
            <person name="Itoh T."/>
            <person name="Shigeta K."/>
            <person name="Senba T."/>
            <person name="Matsumura K."/>
            <person name="Nakajima Y."/>
            <person name="Mizuno T."/>
            <person name="Morinaga M."/>
            <person name="Sasaki M."/>
            <person name="Togashi T."/>
            <person name="Oyama M."/>
            <person name="Hata H."/>
            <person name="Watanabe M."/>
            <person name="Komatsu T."/>
            <person name="Mizushima-Sugano J."/>
            <person name="Satoh T."/>
            <person name="Shirai Y."/>
            <person name="Takahashi Y."/>
            <person name="Nakagawa K."/>
            <person name="Okumura K."/>
            <person name="Nagase T."/>
            <person name="Nomura N."/>
            <person name="Kikuchi H."/>
            <person name="Masuho Y."/>
            <person name="Yamashita R."/>
            <person name="Nakai K."/>
            <person name="Yada T."/>
            <person name="Nakamura Y."/>
            <person name="Ohara O."/>
            <person name="Isogai T."/>
            <person name="Sugano S."/>
        </authorList>
    </citation>
    <scope>NUCLEOTIDE SEQUENCE [LARGE SCALE MRNA] OF 56-1478 (ISOFORM 3)</scope>
    <scope>VARIANTS GLN-250 AND ALA-321</scope>
    <source>
        <tissue>Ovary</tissue>
    </source>
</reference>
<reference key="6">
    <citation type="submission" date="2002-01" db="EMBL/GenBank/DDBJ databases">
        <title>The nucleotide sequence of a long cDNA clone isolated from human spleen.</title>
        <authorList>
            <person name="Jikuya H."/>
            <person name="Takano J."/>
            <person name="Nomura N."/>
            <person name="Kikuno R."/>
            <person name="Nagase T."/>
            <person name="Ohara O."/>
        </authorList>
    </citation>
    <scope>NUCLEOTIDE SEQUENCE [LARGE SCALE MRNA] OF 1213-1478 (ISOFORM 1)</scope>
    <source>
        <tissue>Spleen</tissue>
    </source>
</reference>
<reference key="7">
    <citation type="journal article" date="2007" name="Science">
        <title>ATM and ATR substrate analysis reveals extensive protein networks responsive to DNA damage.</title>
        <authorList>
            <person name="Matsuoka S."/>
            <person name="Ballif B.A."/>
            <person name="Smogorzewska A."/>
            <person name="McDonald E.R. III"/>
            <person name="Hurov K.E."/>
            <person name="Luo J."/>
            <person name="Bakalarski C.E."/>
            <person name="Zhao Z."/>
            <person name="Solimini N."/>
            <person name="Lerenthal Y."/>
            <person name="Shiloh Y."/>
            <person name="Gygi S.P."/>
            <person name="Elledge S.J."/>
        </authorList>
    </citation>
    <scope>PHOSPHORYLATION [LARGE SCALE ANALYSIS] AT SER-878</scope>
    <scope>IDENTIFICATION BY MASS SPECTROMETRY [LARGE SCALE ANALYSIS]</scope>
    <source>
        <tissue>Embryonic kidney</tissue>
    </source>
</reference>
<reference key="8">
    <citation type="journal article" date="2009" name="Anal. Chem.">
        <title>Lys-N and trypsin cover complementary parts of the phosphoproteome in a refined SCX-based approach.</title>
        <authorList>
            <person name="Gauci S."/>
            <person name="Helbig A.O."/>
            <person name="Slijper M."/>
            <person name="Krijgsveld J."/>
            <person name="Heck A.J."/>
            <person name="Mohammed S."/>
        </authorList>
    </citation>
    <scope>ACETYLATION [LARGE SCALE ANALYSIS] AT ALA-2</scope>
    <scope>CLEAVAGE OF INITIATOR METHIONINE [LARGE SCALE ANALYSIS]</scope>
    <scope>IDENTIFICATION BY MASS SPECTROMETRY [LARGE SCALE ANALYSIS]</scope>
</reference>
<reference key="9">
    <citation type="journal article" date="2010" name="J. Cell Biol.">
        <title>FYCO1 is a Rab7 effector that binds to LC3 and PI3P to mediate microtubule plus end-directed vesicle transport.</title>
        <authorList>
            <person name="Pankiv S."/>
            <person name="Alemu E.A."/>
            <person name="Brech A."/>
            <person name="Bruun J.A."/>
            <person name="Lamark T."/>
            <person name="Overvatn A."/>
            <person name="Bjorkoy G."/>
            <person name="Johansen T."/>
        </authorList>
    </citation>
    <scope>FUNCTION</scope>
    <scope>SUBCELLULAR LOCATION</scope>
    <scope>SUBUNIT</scope>
    <scope>INTERACTION WITH MAP1LC3B AND RAB7A</scope>
</reference>
<reference key="10">
    <citation type="journal article" date="2011" name="Am. J. Hum. Genet.">
        <title>Mutations in FYCO1 cause autosomal-recessive congenital cataracts.</title>
        <authorList>
            <person name="Chen J."/>
            <person name="Ma Z."/>
            <person name="Jiao X."/>
            <person name="Fariss R."/>
            <person name="Kantorow W.L."/>
            <person name="Kantorow M."/>
            <person name="Pras E."/>
            <person name="Frydman M."/>
            <person name="Pras E."/>
            <person name="Riazuddin S."/>
            <person name="Riazuddin S.A."/>
            <person name="Hejtmancik J.F."/>
        </authorList>
    </citation>
    <scope>SUBCELLULAR LOCATION</scope>
    <scope>VARIANT CTRCT18 PRO-1376</scope>
</reference>
<reference key="11">
    <citation type="journal article" date="2011" name="BMC Syst. Biol.">
        <title>Initial characterization of the human central proteome.</title>
        <authorList>
            <person name="Burkard T.R."/>
            <person name="Planyavsky M."/>
            <person name="Kaupe I."/>
            <person name="Breitwieser F.P."/>
            <person name="Buerckstuemmer T."/>
            <person name="Bennett K.L."/>
            <person name="Superti-Furga G."/>
            <person name="Colinge J."/>
        </authorList>
    </citation>
    <scope>IDENTIFICATION BY MASS SPECTROMETRY [LARGE SCALE ANALYSIS]</scope>
</reference>
<reference key="12">
    <citation type="journal article" date="2012" name="Mol. Cell. Proteomics">
        <title>Comparative large-scale characterisation of plant vs. mammal proteins reveals similar and idiosyncratic N-alpha acetylation features.</title>
        <authorList>
            <person name="Bienvenut W.V."/>
            <person name="Sumpton D."/>
            <person name="Martinez A."/>
            <person name="Lilla S."/>
            <person name="Espagne C."/>
            <person name="Meinnel T."/>
            <person name="Giglione C."/>
        </authorList>
    </citation>
    <scope>ACETYLATION [LARGE SCALE ANALYSIS] AT ALA-2</scope>
    <scope>CLEAVAGE OF INITIATOR METHIONINE [LARGE SCALE ANALYSIS]</scope>
    <scope>IDENTIFICATION BY MASS SPECTROMETRY [LARGE SCALE ANALYSIS]</scope>
</reference>
<reference key="13">
    <citation type="journal article" date="2012" name="Proc. Natl. Acad. Sci. U.S.A.">
        <title>N-terminal acetylome analyses and functional insights of the N-terminal acetyltransferase NatB.</title>
        <authorList>
            <person name="Van Damme P."/>
            <person name="Lasa M."/>
            <person name="Polevoda B."/>
            <person name="Gazquez C."/>
            <person name="Elosegui-Artola A."/>
            <person name="Kim D.S."/>
            <person name="De Juan-Pardo E."/>
            <person name="Demeyer K."/>
            <person name="Hole K."/>
            <person name="Larrea E."/>
            <person name="Timmerman E."/>
            <person name="Prieto J."/>
            <person name="Arnesen T."/>
            <person name="Sherman F."/>
            <person name="Gevaert K."/>
            <person name="Aldabe R."/>
        </authorList>
    </citation>
    <scope>ACETYLATION [LARGE SCALE ANALYSIS] AT ALA-2</scope>
    <scope>CLEAVAGE OF INITIATOR METHIONINE [LARGE SCALE ANALYSIS]</scope>
    <scope>IDENTIFICATION BY MASS SPECTROMETRY [LARGE SCALE ANALYSIS]</scope>
</reference>
<reference key="14">
    <citation type="journal article" date="2013" name="J. Proteome Res.">
        <title>Toward a comprehensive characterization of a human cancer cell phosphoproteome.</title>
        <authorList>
            <person name="Zhou H."/>
            <person name="Di Palma S."/>
            <person name="Preisinger C."/>
            <person name="Peng M."/>
            <person name="Polat A.N."/>
            <person name="Heck A.J."/>
            <person name="Mohammed S."/>
        </authorList>
    </citation>
    <scope>PHOSPHORYLATION [LARGE SCALE ANALYSIS] AT SER-196</scope>
    <scope>IDENTIFICATION BY MASS SPECTROMETRY [LARGE SCALE ANALYSIS]</scope>
    <source>
        <tissue>Cervix carcinoma</tissue>
        <tissue>Erythroleukemia</tissue>
    </source>
</reference>
<reference key="15">
    <citation type="journal article" date="2013" name="Nature">
        <title>Autophagy promotes primary ciliogenesis by removing OFD1 from centriolar satellites.</title>
        <authorList>
            <person name="Tang Z."/>
            <person name="Lin M.G."/>
            <person name="Stowe T.R."/>
            <person name="Chen S."/>
            <person name="Zhu M."/>
            <person name="Stearns T."/>
            <person name="Franco B."/>
            <person name="Zhong Q."/>
        </authorList>
    </citation>
    <scope>INTERACTION WITH MAP1LC3B</scope>
</reference>
<reference key="16">
    <citation type="journal article" date="2014" name="J. Proteomics">
        <title>An enzyme assisted RP-RPLC approach for in-depth analysis of human liver phosphoproteome.</title>
        <authorList>
            <person name="Bian Y."/>
            <person name="Song C."/>
            <person name="Cheng K."/>
            <person name="Dong M."/>
            <person name="Wang F."/>
            <person name="Huang J."/>
            <person name="Sun D."/>
            <person name="Wang L."/>
            <person name="Ye M."/>
            <person name="Zou H."/>
        </authorList>
    </citation>
    <scope>PHOSPHORYLATION [LARGE SCALE ANALYSIS] AT SER-342</scope>
    <scope>IDENTIFICATION BY MASS SPECTROMETRY [LARGE SCALE ANALYSIS]</scope>
    <source>
        <tissue>Liver</tissue>
    </source>
</reference>
<reference key="17">
    <citation type="journal article" date="2018" name="Orphanet J. Rare Dis.">
        <title>Clinical and genetic characteristics of Chinese patients with familial or sporadic pediatric cataract.</title>
        <authorList>
            <person name="Li J."/>
            <person name="Leng Y."/>
            <person name="Han S."/>
            <person name="Yan L."/>
            <person name="Lu C."/>
            <person name="Luo Y."/>
            <person name="Zhang X."/>
            <person name="Cao L."/>
        </authorList>
    </citation>
    <scope>VARIANT CTRCT18 270-GLN--LEU-1478 DEL</scope>
</reference>
<evidence type="ECO:0000250" key="1"/>
<evidence type="ECO:0000250" key="2">
    <source>
        <dbReference type="UniProtKB" id="Q8VDC1"/>
    </source>
</evidence>
<evidence type="ECO:0000255" key="3"/>
<evidence type="ECO:0000255" key="4">
    <source>
        <dbReference type="PROSITE-ProRule" id="PRU00091"/>
    </source>
</evidence>
<evidence type="ECO:0000255" key="5">
    <source>
        <dbReference type="PROSITE-ProRule" id="PRU00096"/>
    </source>
</evidence>
<evidence type="ECO:0000255" key="6">
    <source>
        <dbReference type="PROSITE-ProRule" id="PRU00178"/>
    </source>
</evidence>
<evidence type="ECO:0000256" key="7">
    <source>
        <dbReference type="SAM" id="MobiDB-lite"/>
    </source>
</evidence>
<evidence type="ECO:0000269" key="8">
    <source>
    </source>
</evidence>
<evidence type="ECO:0000269" key="9">
    <source>
    </source>
</evidence>
<evidence type="ECO:0000269" key="10">
    <source>
    </source>
</evidence>
<evidence type="ECO:0000269" key="11">
    <source>
    </source>
</evidence>
<evidence type="ECO:0000269" key="12">
    <source>
    </source>
</evidence>
<evidence type="ECO:0000269" key="13">
    <source>
    </source>
</evidence>
<evidence type="ECO:0000269" key="14">
    <source>
    </source>
</evidence>
<evidence type="ECO:0000303" key="15">
    <source>
    </source>
</evidence>
<evidence type="ECO:0000303" key="16">
    <source>
    </source>
</evidence>
<evidence type="ECO:0000305" key="17"/>
<evidence type="ECO:0007744" key="18">
    <source>
    </source>
</evidence>
<evidence type="ECO:0007744" key="19">
    <source>
    </source>
</evidence>
<evidence type="ECO:0007744" key="20">
    <source>
    </source>
</evidence>
<evidence type="ECO:0007744" key="21">
    <source>
    </source>
</evidence>
<evidence type="ECO:0007744" key="22">
    <source>
    </source>
</evidence>
<evidence type="ECO:0007744" key="23">
    <source>
    </source>
</evidence>
<evidence type="ECO:0007829" key="24">
    <source>
        <dbReference type="PDB" id="5CX3"/>
    </source>
</evidence>
<evidence type="ECO:0007829" key="25">
    <source>
        <dbReference type="PDB" id="5D94"/>
    </source>
</evidence>
<evidence type="ECO:0007829" key="26">
    <source>
        <dbReference type="PDB" id="7BQI"/>
    </source>
</evidence>